<name>FER_BRYMA</name>
<protein>
    <recommendedName>
        <fullName>Ferredoxin</fullName>
    </recommendedName>
</protein>
<proteinExistence type="evidence at protein level"/>
<keyword id="KW-0001">2Fe-2S</keyword>
<keyword id="KW-0150">Chloroplast</keyword>
<keyword id="KW-0903">Direct protein sequencing</keyword>
<keyword id="KW-0249">Electron transport</keyword>
<keyword id="KW-0408">Iron</keyword>
<keyword id="KW-0411">Iron-sulfur</keyword>
<keyword id="KW-0479">Metal-binding</keyword>
<keyword id="KW-0934">Plastid</keyword>
<keyword id="KW-0813">Transport</keyword>
<reference key="1">
    <citation type="journal article" date="1985" name="Physiol. Veg.">
        <title>Isolation, properties, and amino acid sequence of a ferredoxin from a multinuclear, unicellular green alga, Bryopsis marina.</title>
        <authorList>
            <person name="Minami Y."/>
            <person name="Sugimura Y."/>
            <person name="Wakabayashi S."/>
            <person name="Wada K."/>
            <person name="Takahashi Y."/>
            <person name="Matsubara H."/>
        </authorList>
    </citation>
    <scope>PROTEIN SEQUENCE</scope>
</reference>
<comment type="function">
    <text>Ferredoxins are iron-sulfur proteins that transfer electrons in a wide variety of metabolic reactions.</text>
</comment>
<comment type="cofactor">
    <cofactor>
        <name>[2Fe-2S] cluster</name>
        <dbReference type="ChEBI" id="CHEBI:190135"/>
    </cofactor>
    <text>Binds 1 [2Fe-2S] cluster.</text>
</comment>
<comment type="subcellular location">
    <subcellularLocation>
        <location>Plastid</location>
        <location>Chloroplast</location>
    </subcellularLocation>
</comment>
<comment type="similarity">
    <text evidence="2">Belongs to the 2Fe2S plant-type ferredoxin family.</text>
</comment>
<dbReference type="PIR" id="S07452">
    <property type="entry name" value="FEYO"/>
</dbReference>
<dbReference type="SMR" id="P07838"/>
<dbReference type="GO" id="GO:0009507">
    <property type="term" value="C:chloroplast"/>
    <property type="evidence" value="ECO:0007669"/>
    <property type="project" value="UniProtKB-SubCell"/>
</dbReference>
<dbReference type="GO" id="GO:0051537">
    <property type="term" value="F:2 iron, 2 sulfur cluster binding"/>
    <property type="evidence" value="ECO:0007669"/>
    <property type="project" value="UniProtKB-KW"/>
</dbReference>
<dbReference type="GO" id="GO:0009055">
    <property type="term" value="F:electron transfer activity"/>
    <property type="evidence" value="ECO:0007669"/>
    <property type="project" value="InterPro"/>
</dbReference>
<dbReference type="GO" id="GO:0046872">
    <property type="term" value="F:metal ion binding"/>
    <property type="evidence" value="ECO:0007669"/>
    <property type="project" value="UniProtKB-KW"/>
</dbReference>
<dbReference type="GO" id="GO:0022900">
    <property type="term" value="P:electron transport chain"/>
    <property type="evidence" value="ECO:0007669"/>
    <property type="project" value="InterPro"/>
</dbReference>
<dbReference type="CDD" id="cd00207">
    <property type="entry name" value="fer2"/>
    <property type="match status" value="1"/>
</dbReference>
<dbReference type="FunFam" id="3.10.20.30:FF:000014">
    <property type="entry name" value="Ferredoxin"/>
    <property type="match status" value="1"/>
</dbReference>
<dbReference type="Gene3D" id="3.10.20.30">
    <property type="match status" value="1"/>
</dbReference>
<dbReference type="InterPro" id="IPR036010">
    <property type="entry name" value="2Fe-2S_ferredoxin-like_sf"/>
</dbReference>
<dbReference type="InterPro" id="IPR001041">
    <property type="entry name" value="2Fe-2S_ferredoxin-type"/>
</dbReference>
<dbReference type="InterPro" id="IPR006058">
    <property type="entry name" value="2Fe2S_fd_BS"/>
</dbReference>
<dbReference type="InterPro" id="IPR012675">
    <property type="entry name" value="Beta-grasp_dom_sf"/>
</dbReference>
<dbReference type="InterPro" id="IPR010241">
    <property type="entry name" value="Fd_pln"/>
</dbReference>
<dbReference type="NCBIfam" id="TIGR02008">
    <property type="entry name" value="fdx_plant"/>
    <property type="match status" value="1"/>
</dbReference>
<dbReference type="PANTHER" id="PTHR43112">
    <property type="entry name" value="FERREDOXIN"/>
    <property type="match status" value="1"/>
</dbReference>
<dbReference type="PANTHER" id="PTHR43112:SF3">
    <property type="entry name" value="FERREDOXIN-2, CHLOROPLASTIC"/>
    <property type="match status" value="1"/>
</dbReference>
<dbReference type="Pfam" id="PF00111">
    <property type="entry name" value="Fer2"/>
    <property type="match status" value="1"/>
</dbReference>
<dbReference type="SUPFAM" id="SSF54292">
    <property type="entry name" value="2Fe-2S ferredoxin-like"/>
    <property type="match status" value="1"/>
</dbReference>
<dbReference type="PROSITE" id="PS00197">
    <property type="entry name" value="2FE2S_FER_1"/>
    <property type="match status" value="1"/>
</dbReference>
<dbReference type="PROSITE" id="PS51085">
    <property type="entry name" value="2FE2S_FER_2"/>
    <property type="match status" value="1"/>
</dbReference>
<feature type="chain" id="PRO_0000189310" description="Ferredoxin">
    <location>
        <begin position="1"/>
        <end position="98"/>
    </location>
</feature>
<feature type="domain" description="2Fe-2S ferredoxin-type" evidence="1">
    <location>
        <begin position="3"/>
        <end position="94"/>
    </location>
</feature>
<feature type="binding site" evidence="1">
    <location>
        <position position="40"/>
    </location>
    <ligand>
        <name>[2Fe-2S] cluster</name>
        <dbReference type="ChEBI" id="CHEBI:190135"/>
    </ligand>
</feature>
<feature type="binding site" evidence="1">
    <location>
        <position position="45"/>
    </location>
    <ligand>
        <name>[2Fe-2S] cluster</name>
        <dbReference type="ChEBI" id="CHEBI:190135"/>
    </ligand>
</feature>
<feature type="binding site" evidence="1">
    <location>
        <position position="48"/>
    </location>
    <ligand>
        <name>[2Fe-2S] cluster</name>
        <dbReference type="ChEBI" id="CHEBI:190135"/>
    </ligand>
</feature>
<feature type="binding site" evidence="1">
    <location>
        <position position="78"/>
    </location>
    <ligand>
        <name>[2Fe-2S] cluster</name>
        <dbReference type="ChEBI" id="CHEBI:190135"/>
    </ligand>
</feature>
<sequence>ASYKVTLKLDDGSEAVIDCDEDSFILDVAEEEGIDIPFSCRSGSCSTCAGKIEGGTVDQSEQTFLDDDQMEEGYVLTCVAYPTSDCTILTHQEEEMIG</sequence>
<evidence type="ECO:0000255" key="1">
    <source>
        <dbReference type="PROSITE-ProRule" id="PRU00465"/>
    </source>
</evidence>
<evidence type="ECO:0000305" key="2"/>
<organism>
    <name type="scientific">Bryopsis maxima</name>
    <name type="common">Green alga</name>
    <dbReference type="NCBI Taxonomy" id="3129"/>
    <lineage>
        <taxon>Eukaryota</taxon>
        <taxon>Viridiplantae</taxon>
        <taxon>Chlorophyta</taxon>
        <taxon>Ulvophyceae</taxon>
        <taxon>TCBD clade</taxon>
        <taxon>Bryopsidales</taxon>
        <taxon>Bryopsidineae</taxon>
        <taxon>Bryopsidaceae</taxon>
        <taxon>Bryopsis</taxon>
    </lineage>
</organism>
<accession>P07838</accession>